<keyword id="KW-1185">Reference proteome</keyword>
<keyword id="KW-0687">Ribonucleoprotein</keyword>
<keyword id="KW-0689">Ribosomal protein</keyword>
<keyword id="KW-0694">RNA-binding</keyword>
<keyword id="KW-0699">rRNA-binding</keyword>
<proteinExistence type="inferred from homology"/>
<dbReference type="EMBL" id="CP000699">
    <property type="protein sequence ID" value="ABQ71223.1"/>
    <property type="molecule type" value="Genomic_DNA"/>
</dbReference>
<dbReference type="SMR" id="A5VG07"/>
<dbReference type="STRING" id="392499.Swit_4886"/>
<dbReference type="PaxDb" id="392499-Swit_4886"/>
<dbReference type="KEGG" id="swi:Swit_4886"/>
<dbReference type="eggNOG" id="COG0268">
    <property type="taxonomic scope" value="Bacteria"/>
</dbReference>
<dbReference type="HOGENOM" id="CLU_160655_3_0_5"/>
<dbReference type="OrthoDB" id="9807974at2"/>
<dbReference type="Proteomes" id="UP000001989">
    <property type="component" value="Chromosome"/>
</dbReference>
<dbReference type="GO" id="GO:0015935">
    <property type="term" value="C:small ribosomal subunit"/>
    <property type="evidence" value="ECO:0007669"/>
    <property type="project" value="TreeGrafter"/>
</dbReference>
<dbReference type="GO" id="GO:0070181">
    <property type="term" value="F:small ribosomal subunit rRNA binding"/>
    <property type="evidence" value="ECO:0007669"/>
    <property type="project" value="TreeGrafter"/>
</dbReference>
<dbReference type="GO" id="GO:0003735">
    <property type="term" value="F:structural constituent of ribosome"/>
    <property type="evidence" value="ECO:0007669"/>
    <property type="project" value="InterPro"/>
</dbReference>
<dbReference type="GO" id="GO:0006412">
    <property type="term" value="P:translation"/>
    <property type="evidence" value="ECO:0007669"/>
    <property type="project" value="UniProtKB-UniRule"/>
</dbReference>
<dbReference type="FunFam" id="1.20.58.110:FF:000001">
    <property type="entry name" value="30S ribosomal protein S20"/>
    <property type="match status" value="1"/>
</dbReference>
<dbReference type="Gene3D" id="1.20.58.110">
    <property type="entry name" value="Ribosomal protein S20"/>
    <property type="match status" value="1"/>
</dbReference>
<dbReference type="HAMAP" id="MF_00500">
    <property type="entry name" value="Ribosomal_bS20"/>
    <property type="match status" value="1"/>
</dbReference>
<dbReference type="InterPro" id="IPR002583">
    <property type="entry name" value="Ribosomal_bS20"/>
</dbReference>
<dbReference type="InterPro" id="IPR036510">
    <property type="entry name" value="Ribosomal_bS20_sf"/>
</dbReference>
<dbReference type="NCBIfam" id="TIGR00029">
    <property type="entry name" value="S20"/>
    <property type="match status" value="1"/>
</dbReference>
<dbReference type="PANTHER" id="PTHR33398">
    <property type="entry name" value="30S RIBOSOMAL PROTEIN S20"/>
    <property type="match status" value="1"/>
</dbReference>
<dbReference type="PANTHER" id="PTHR33398:SF1">
    <property type="entry name" value="SMALL RIBOSOMAL SUBUNIT PROTEIN BS20C"/>
    <property type="match status" value="1"/>
</dbReference>
<dbReference type="Pfam" id="PF01649">
    <property type="entry name" value="Ribosomal_S20p"/>
    <property type="match status" value="1"/>
</dbReference>
<dbReference type="SUPFAM" id="SSF46992">
    <property type="entry name" value="Ribosomal protein S20"/>
    <property type="match status" value="1"/>
</dbReference>
<name>RS20_RHIWR</name>
<evidence type="ECO:0000255" key="1">
    <source>
        <dbReference type="HAMAP-Rule" id="MF_00500"/>
    </source>
</evidence>
<evidence type="ECO:0000305" key="2"/>
<protein>
    <recommendedName>
        <fullName evidence="1">Small ribosomal subunit protein bS20</fullName>
    </recommendedName>
    <alternativeName>
        <fullName evidence="2">30S ribosomal protein S20</fullName>
    </alternativeName>
</protein>
<accession>A5VG07</accession>
<organism>
    <name type="scientific">Rhizorhabdus wittichii (strain DSM 6014 / CCUG 31198 / JCM 15750 / NBRC 105917 / EY 4224 / RW1)</name>
    <name type="common">Sphingomonas wittichii</name>
    <dbReference type="NCBI Taxonomy" id="392499"/>
    <lineage>
        <taxon>Bacteria</taxon>
        <taxon>Pseudomonadati</taxon>
        <taxon>Pseudomonadota</taxon>
        <taxon>Alphaproteobacteria</taxon>
        <taxon>Sphingomonadales</taxon>
        <taxon>Sphingomonadaceae</taxon>
        <taxon>Rhizorhabdus</taxon>
    </lineage>
</organism>
<sequence length="87" mass="9413">MANTPQAKKRIRRNDRRAEINGARVSRIRTFVKKVEAALAAGDKTAATAALAAAQPELFRGVSKGVVHKNTASRKFSRLTKRIAALG</sequence>
<gene>
    <name evidence="1" type="primary">rpsT</name>
    <name type="ordered locus">Swit_4886</name>
</gene>
<comment type="function">
    <text evidence="1">Binds directly to 16S ribosomal RNA.</text>
</comment>
<comment type="similarity">
    <text evidence="1">Belongs to the bacterial ribosomal protein bS20 family.</text>
</comment>
<reference key="1">
    <citation type="journal article" date="2010" name="J. Bacteriol.">
        <title>Genome sequence of the dioxin-mineralizing bacterium Sphingomonas wittichii RW1.</title>
        <authorList>
            <person name="Miller T.R."/>
            <person name="Delcher A.L."/>
            <person name="Salzberg S.L."/>
            <person name="Saunders E."/>
            <person name="Detter J.C."/>
            <person name="Halden R.U."/>
        </authorList>
    </citation>
    <scope>NUCLEOTIDE SEQUENCE [LARGE SCALE GENOMIC DNA]</scope>
    <source>
        <strain>DSM 6014 / CCUG 31198 / JCM 15750 / NBRC 105917 / EY 4224 / RW1</strain>
    </source>
</reference>
<feature type="chain" id="PRO_1000014661" description="Small ribosomal subunit protein bS20">
    <location>
        <begin position="1"/>
        <end position="87"/>
    </location>
</feature>